<dbReference type="EC" id="1.14.-.-"/>
<dbReference type="EMBL" id="AL049608">
    <property type="protein sequence ID" value="CAB40766.1"/>
    <property type="status" value="ALT_INIT"/>
    <property type="molecule type" value="Genomic_DNA"/>
</dbReference>
<dbReference type="EMBL" id="AL161536">
    <property type="protein sequence ID" value="CAB78373.1"/>
    <property type="status" value="ALT_INIT"/>
    <property type="molecule type" value="Genomic_DNA"/>
</dbReference>
<dbReference type="EMBL" id="CP002687">
    <property type="protein sequence ID" value="AEE83262.1"/>
    <property type="molecule type" value="Genomic_DNA"/>
</dbReference>
<dbReference type="EMBL" id="BX827756">
    <property type="status" value="NOT_ANNOTATED_CDS"/>
    <property type="molecule type" value="mRNA"/>
</dbReference>
<dbReference type="PIR" id="T06288">
    <property type="entry name" value="T06288"/>
</dbReference>
<dbReference type="RefSeq" id="NP_193067.3">
    <molecule id="Q9T0K2-1"/>
    <property type="nucleotide sequence ID" value="NM_117404.4"/>
</dbReference>
<dbReference type="SMR" id="Q9T0K2"/>
<dbReference type="FunCoup" id="Q9T0K2">
    <property type="interactions" value="243"/>
</dbReference>
<dbReference type="STRING" id="3702.Q9T0K2"/>
<dbReference type="PaxDb" id="3702-AT4G13310.1"/>
<dbReference type="ProteomicsDB" id="240449">
    <molecule id="Q9T0K2-1"/>
</dbReference>
<dbReference type="EnsemblPlants" id="AT4G13310.1">
    <molecule id="Q9T0K2-1"/>
    <property type="protein sequence ID" value="AT4G13310.1"/>
    <property type="gene ID" value="AT4G13310"/>
</dbReference>
<dbReference type="GeneID" id="826961"/>
<dbReference type="Gramene" id="AT4G13310.1">
    <molecule id="Q9T0K2-1"/>
    <property type="protein sequence ID" value="AT4G13310.1"/>
    <property type="gene ID" value="AT4G13310"/>
</dbReference>
<dbReference type="KEGG" id="ath:AT4G13310"/>
<dbReference type="Araport" id="AT4G13310"/>
<dbReference type="TAIR" id="AT4G13310">
    <property type="gene designation" value="CYP71A20"/>
</dbReference>
<dbReference type="eggNOG" id="KOG0156">
    <property type="taxonomic scope" value="Eukaryota"/>
</dbReference>
<dbReference type="HOGENOM" id="CLU_001570_4_1_1"/>
<dbReference type="InParanoid" id="Q9T0K2"/>
<dbReference type="OMA" id="EEINIMM"/>
<dbReference type="PhylomeDB" id="Q9T0K2"/>
<dbReference type="PRO" id="PR:Q9T0K2"/>
<dbReference type="Proteomes" id="UP000006548">
    <property type="component" value="Chromosome 4"/>
</dbReference>
<dbReference type="ExpressionAtlas" id="Q9T0K2">
    <property type="expression patterns" value="baseline and differential"/>
</dbReference>
<dbReference type="GO" id="GO:0016020">
    <property type="term" value="C:membrane"/>
    <property type="evidence" value="ECO:0007669"/>
    <property type="project" value="UniProtKB-SubCell"/>
</dbReference>
<dbReference type="GO" id="GO:0009506">
    <property type="term" value="C:plasmodesma"/>
    <property type="evidence" value="ECO:0007005"/>
    <property type="project" value="TAIR"/>
</dbReference>
<dbReference type="GO" id="GO:0020037">
    <property type="term" value="F:heme binding"/>
    <property type="evidence" value="ECO:0007669"/>
    <property type="project" value="InterPro"/>
</dbReference>
<dbReference type="GO" id="GO:0005506">
    <property type="term" value="F:iron ion binding"/>
    <property type="evidence" value="ECO:0007669"/>
    <property type="project" value="InterPro"/>
</dbReference>
<dbReference type="GO" id="GO:0004497">
    <property type="term" value="F:monooxygenase activity"/>
    <property type="evidence" value="ECO:0007669"/>
    <property type="project" value="UniProtKB-KW"/>
</dbReference>
<dbReference type="GO" id="GO:0016705">
    <property type="term" value="F:oxidoreductase activity, acting on paired donors, with incorporation or reduction of molecular oxygen"/>
    <property type="evidence" value="ECO:0007669"/>
    <property type="project" value="InterPro"/>
</dbReference>
<dbReference type="CDD" id="cd11072">
    <property type="entry name" value="CYP71-like"/>
    <property type="match status" value="1"/>
</dbReference>
<dbReference type="FunFam" id="1.10.630.10:FF:000011">
    <property type="entry name" value="Cytochrome P450 83B1"/>
    <property type="match status" value="1"/>
</dbReference>
<dbReference type="Gene3D" id="1.10.630.10">
    <property type="entry name" value="Cytochrome P450"/>
    <property type="match status" value="1"/>
</dbReference>
<dbReference type="InterPro" id="IPR001128">
    <property type="entry name" value="Cyt_P450"/>
</dbReference>
<dbReference type="InterPro" id="IPR017972">
    <property type="entry name" value="Cyt_P450_CS"/>
</dbReference>
<dbReference type="InterPro" id="IPR002401">
    <property type="entry name" value="Cyt_P450_E_grp-I"/>
</dbReference>
<dbReference type="InterPro" id="IPR036396">
    <property type="entry name" value="Cyt_P450_sf"/>
</dbReference>
<dbReference type="PANTHER" id="PTHR47955:SF15">
    <property type="entry name" value="CYTOCHROME P450 71A2-LIKE"/>
    <property type="match status" value="1"/>
</dbReference>
<dbReference type="PANTHER" id="PTHR47955">
    <property type="entry name" value="CYTOCHROME P450 FAMILY 71 PROTEIN"/>
    <property type="match status" value="1"/>
</dbReference>
<dbReference type="Pfam" id="PF00067">
    <property type="entry name" value="p450"/>
    <property type="match status" value="1"/>
</dbReference>
<dbReference type="PRINTS" id="PR00463">
    <property type="entry name" value="EP450I"/>
</dbReference>
<dbReference type="PRINTS" id="PR00385">
    <property type="entry name" value="P450"/>
</dbReference>
<dbReference type="SUPFAM" id="SSF48264">
    <property type="entry name" value="Cytochrome P450"/>
    <property type="match status" value="1"/>
</dbReference>
<dbReference type="PROSITE" id="PS00086">
    <property type="entry name" value="CYTOCHROME_P450"/>
    <property type="match status" value="1"/>
</dbReference>
<sequence length="497" mass="56498">MEMILITLCLTTLLALLLKSILKRTATKNFNLPPSPWRLPVIGNLHQLSLHTHRSLRSLSLRYGPLMLLHFGRTPVLIVSSADVAHDVMKTHDLVCANRPKTKVVDKILSGGRDVAFAPYGEYWRQMKSICIQNLLNNKMVRSYEKIREEEIKRMIEKLEKASCSSSPSPVNLSQILMTLTNDIICRVALGRKYSGKKDGIDVENIVRTFAALLGEFPVGEYIPSLSWIDRIRGLDHKMEVVDKRFDEFLERVVKEHEEADKETRSDLVDKLLTIQSDKTGQFELEKSALKLIIWDMFLAGTATTLSFLEWAMTELMRNPKVMKKLQEEIRSSSPQDLFVTEKEAEKMNYLQAVIKEALRLRPPAPLLVPRVLSEDVKLKGYNIPAGTQVIVNAWAIQRDTTTWGTDAEEFKPERHLDTNLDFQGQDFKFIPFGSGKRICPGIGFTSALIGVTLANIVKRFNWRMDVEPQRVQHDLTEATGLVVFRKFPLIAIPSSA</sequence>
<accession>Q9T0K2</accession>
<reference key="1">
    <citation type="journal article" date="1999" name="Nature">
        <title>Sequence and analysis of chromosome 4 of the plant Arabidopsis thaliana.</title>
        <authorList>
            <person name="Mayer K.F.X."/>
            <person name="Schueller C."/>
            <person name="Wambutt R."/>
            <person name="Murphy G."/>
            <person name="Volckaert G."/>
            <person name="Pohl T."/>
            <person name="Duesterhoeft A."/>
            <person name="Stiekema W."/>
            <person name="Entian K.-D."/>
            <person name="Terryn N."/>
            <person name="Harris B."/>
            <person name="Ansorge W."/>
            <person name="Brandt P."/>
            <person name="Grivell L.A."/>
            <person name="Rieger M."/>
            <person name="Weichselgartner M."/>
            <person name="de Simone V."/>
            <person name="Obermaier B."/>
            <person name="Mache R."/>
            <person name="Mueller M."/>
            <person name="Kreis M."/>
            <person name="Delseny M."/>
            <person name="Puigdomenech P."/>
            <person name="Watson M."/>
            <person name="Schmidtheini T."/>
            <person name="Reichert B."/>
            <person name="Portetelle D."/>
            <person name="Perez-Alonso M."/>
            <person name="Boutry M."/>
            <person name="Bancroft I."/>
            <person name="Vos P."/>
            <person name="Hoheisel J."/>
            <person name="Zimmermann W."/>
            <person name="Wedler H."/>
            <person name="Ridley P."/>
            <person name="Langham S.-A."/>
            <person name="McCullagh B."/>
            <person name="Bilham L."/>
            <person name="Robben J."/>
            <person name="van der Schueren J."/>
            <person name="Grymonprez B."/>
            <person name="Chuang Y.-J."/>
            <person name="Vandenbussche F."/>
            <person name="Braeken M."/>
            <person name="Weltjens I."/>
            <person name="Voet M."/>
            <person name="Bastiaens I."/>
            <person name="Aert R."/>
            <person name="Defoor E."/>
            <person name="Weitzenegger T."/>
            <person name="Bothe G."/>
            <person name="Ramsperger U."/>
            <person name="Hilbert H."/>
            <person name="Braun M."/>
            <person name="Holzer E."/>
            <person name="Brandt A."/>
            <person name="Peters S."/>
            <person name="van Staveren M."/>
            <person name="Dirkse W."/>
            <person name="Mooijman P."/>
            <person name="Klein Lankhorst R."/>
            <person name="Rose M."/>
            <person name="Hauf J."/>
            <person name="Koetter P."/>
            <person name="Berneiser S."/>
            <person name="Hempel S."/>
            <person name="Feldpausch M."/>
            <person name="Lamberth S."/>
            <person name="Van den Daele H."/>
            <person name="De Keyser A."/>
            <person name="Buysshaert C."/>
            <person name="Gielen J."/>
            <person name="Villarroel R."/>
            <person name="De Clercq R."/>
            <person name="van Montagu M."/>
            <person name="Rogers J."/>
            <person name="Cronin A."/>
            <person name="Quail M.A."/>
            <person name="Bray-Allen S."/>
            <person name="Clark L."/>
            <person name="Doggett J."/>
            <person name="Hall S."/>
            <person name="Kay M."/>
            <person name="Lennard N."/>
            <person name="McLay K."/>
            <person name="Mayes R."/>
            <person name="Pettett A."/>
            <person name="Rajandream M.A."/>
            <person name="Lyne M."/>
            <person name="Benes V."/>
            <person name="Rechmann S."/>
            <person name="Borkova D."/>
            <person name="Bloecker H."/>
            <person name="Scharfe M."/>
            <person name="Grimm M."/>
            <person name="Loehnert T.-H."/>
            <person name="Dose S."/>
            <person name="de Haan M."/>
            <person name="Maarse A.C."/>
            <person name="Schaefer M."/>
            <person name="Mueller-Auer S."/>
            <person name="Gabel C."/>
            <person name="Fuchs M."/>
            <person name="Fartmann B."/>
            <person name="Granderath K."/>
            <person name="Dauner D."/>
            <person name="Herzl A."/>
            <person name="Neumann S."/>
            <person name="Argiriou A."/>
            <person name="Vitale D."/>
            <person name="Liguori R."/>
            <person name="Piravandi E."/>
            <person name="Massenet O."/>
            <person name="Quigley F."/>
            <person name="Clabauld G."/>
            <person name="Muendlein A."/>
            <person name="Felber R."/>
            <person name="Schnabl S."/>
            <person name="Hiller R."/>
            <person name="Schmidt W."/>
            <person name="Lecharny A."/>
            <person name="Aubourg S."/>
            <person name="Chefdor F."/>
            <person name="Cooke R."/>
            <person name="Berger C."/>
            <person name="Monfort A."/>
            <person name="Casacuberta E."/>
            <person name="Gibbons T."/>
            <person name="Weber N."/>
            <person name="Vandenbol M."/>
            <person name="Bargues M."/>
            <person name="Terol J."/>
            <person name="Torres A."/>
            <person name="Perez-Perez A."/>
            <person name="Purnelle B."/>
            <person name="Bent E."/>
            <person name="Johnson S."/>
            <person name="Tacon D."/>
            <person name="Jesse T."/>
            <person name="Heijnen L."/>
            <person name="Schwarz S."/>
            <person name="Scholler P."/>
            <person name="Heber S."/>
            <person name="Francs P."/>
            <person name="Bielke C."/>
            <person name="Frishman D."/>
            <person name="Haase D."/>
            <person name="Lemcke K."/>
            <person name="Mewes H.-W."/>
            <person name="Stocker S."/>
            <person name="Zaccaria P."/>
            <person name="Bevan M."/>
            <person name="Wilson R.K."/>
            <person name="de la Bastide M."/>
            <person name="Habermann K."/>
            <person name="Parnell L."/>
            <person name="Dedhia N."/>
            <person name="Gnoj L."/>
            <person name="Schutz K."/>
            <person name="Huang E."/>
            <person name="Spiegel L."/>
            <person name="Sekhon M."/>
            <person name="Murray J."/>
            <person name="Sheet P."/>
            <person name="Cordes M."/>
            <person name="Abu-Threideh J."/>
            <person name="Stoneking T."/>
            <person name="Kalicki J."/>
            <person name="Graves T."/>
            <person name="Harmon G."/>
            <person name="Edwards J."/>
            <person name="Latreille P."/>
            <person name="Courtney L."/>
            <person name="Cloud J."/>
            <person name="Abbott A."/>
            <person name="Scott K."/>
            <person name="Johnson D."/>
            <person name="Minx P."/>
            <person name="Bentley D."/>
            <person name="Fulton B."/>
            <person name="Miller N."/>
            <person name="Greco T."/>
            <person name="Kemp K."/>
            <person name="Kramer J."/>
            <person name="Fulton L."/>
            <person name="Mardis E."/>
            <person name="Dante M."/>
            <person name="Pepin K."/>
            <person name="Hillier L.W."/>
            <person name="Nelson J."/>
            <person name="Spieth J."/>
            <person name="Ryan E."/>
            <person name="Andrews S."/>
            <person name="Geisel C."/>
            <person name="Layman D."/>
            <person name="Du H."/>
            <person name="Ali J."/>
            <person name="Berghoff A."/>
            <person name="Jones K."/>
            <person name="Drone K."/>
            <person name="Cotton M."/>
            <person name="Joshu C."/>
            <person name="Antonoiu B."/>
            <person name="Zidanic M."/>
            <person name="Strong C."/>
            <person name="Sun H."/>
            <person name="Lamar B."/>
            <person name="Yordan C."/>
            <person name="Ma P."/>
            <person name="Zhong J."/>
            <person name="Preston R."/>
            <person name="Vil D."/>
            <person name="Shekher M."/>
            <person name="Matero A."/>
            <person name="Shah R."/>
            <person name="Swaby I.K."/>
            <person name="O'Shaughnessy A."/>
            <person name="Rodriguez M."/>
            <person name="Hoffman J."/>
            <person name="Till S."/>
            <person name="Granat S."/>
            <person name="Shohdy N."/>
            <person name="Hasegawa A."/>
            <person name="Hameed A."/>
            <person name="Lodhi M."/>
            <person name="Johnson A."/>
            <person name="Chen E."/>
            <person name="Marra M.A."/>
            <person name="Martienssen R."/>
            <person name="McCombie W.R."/>
        </authorList>
    </citation>
    <scope>NUCLEOTIDE SEQUENCE [LARGE SCALE GENOMIC DNA]</scope>
    <source>
        <strain>cv. Columbia</strain>
    </source>
</reference>
<reference key="2">
    <citation type="journal article" date="2017" name="Plant J.">
        <title>Araport11: a complete reannotation of the Arabidopsis thaliana reference genome.</title>
        <authorList>
            <person name="Cheng C.Y."/>
            <person name="Krishnakumar V."/>
            <person name="Chan A.P."/>
            <person name="Thibaud-Nissen F."/>
            <person name="Schobel S."/>
            <person name="Town C.D."/>
        </authorList>
    </citation>
    <scope>GENOME REANNOTATION</scope>
    <source>
        <strain>cv. Columbia</strain>
    </source>
</reference>
<reference key="3">
    <citation type="journal article" date="2004" name="Genome Res.">
        <title>Whole genome sequence comparisons and 'full-length' cDNA sequences: a combined approach to evaluate and improve Arabidopsis genome annotation.</title>
        <authorList>
            <person name="Castelli V."/>
            <person name="Aury J.-M."/>
            <person name="Jaillon O."/>
            <person name="Wincker P."/>
            <person name="Clepet C."/>
            <person name="Menard M."/>
            <person name="Cruaud C."/>
            <person name="Quetier F."/>
            <person name="Scarpelli C."/>
            <person name="Schaechter V."/>
            <person name="Temple G."/>
            <person name="Caboche M."/>
            <person name="Weissenbach J."/>
            <person name="Salanoubat M."/>
        </authorList>
    </citation>
    <scope>NUCLEOTIDE SEQUENCE [LARGE SCALE MRNA] (ISOFORM 1)</scope>
    <source>
        <strain>cv. Columbia</strain>
    </source>
</reference>
<keyword id="KW-0025">Alternative splicing</keyword>
<keyword id="KW-0349">Heme</keyword>
<keyword id="KW-0408">Iron</keyword>
<keyword id="KW-0472">Membrane</keyword>
<keyword id="KW-0479">Metal-binding</keyword>
<keyword id="KW-0503">Monooxygenase</keyword>
<keyword id="KW-0560">Oxidoreductase</keyword>
<keyword id="KW-1185">Reference proteome</keyword>
<keyword id="KW-0812">Transmembrane</keyword>
<keyword id="KW-1133">Transmembrane helix</keyword>
<evidence type="ECO:0000250" key="1"/>
<evidence type="ECO:0000255" key="2"/>
<evidence type="ECO:0000305" key="3"/>
<organism>
    <name type="scientific">Arabidopsis thaliana</name>
    <name type="common">Mouse-ear cress</name>
    <dbReference type="NCBI Taxonomy" id="3702"/>
    <lineage>
        <taxon>Eukaryota</taxon>
        <taxon>Viridiplantae</taxon>
        <taxon>Streptophyta</taxon>
        <taxon>Embryophyta</taxon>
        <taxon>Tracheophyta</taxon>
        <taxon>Spermatophyta</taxon>
        <taxon>Magnoliopsida</taxon>
        <taxon>eudicotyledons</taxon>
        <taxon>Gunneridae</taxon>
        <taxon>Pentapetalae</taxon>
        <taxon>rosids</taxon>
        <taxon>malvids</taxon>
        <taxon>Brassicales</taxon>
        <taxon>Brassicaceae</taxon>
        <taxon>Camelineae</taxon>
        <taxon>Arabidopsis</taxon>
    </lineage>
</organism>
<name>C71AK_ARATH</name>
<comment type="cofactor">
    <cofactor evidence="1">
        <name>heme</name>
        <dbReference type="ChEBI" id="CHEBI:30413"/>
    </cofactor>
</comment>
<comment type="subcellular location">
    <subcellularLocation>
        <location evidence="3">Membrane</location>
        <topology evidence="3">Single-pass membrane protein</topology>
    </subcellularLocation>
</comment>
<comment type="alternative products">
    <event type="alternative splicing"/>
    <isoform>
        <id>Q9T0K2-1</id>
        <name>1</name>
        <sequence type="displayed"/>
    </isoform>
    <text>A number of isoforms are produced. According to EST sequences.</text>
</comment>
<comment type="similarity">
    <text evidence="3">Belongs to the cytochrome P450 family.</text>
</comment>
<comment type="sequence caution" evidence="3">
    <conflict type="frameshift">
        <sequence resource="EMBL" id="BX827756"/>
    </conflict>
</comment>
<comment type="sequence caution" evidence="3">
    <conflict type="erroneous initiation">
        <sequence resource="EMBL-CDS" id="CAB40766"/>
    </conflict>
</comment>
<comment type="sequence caution" evidence="3">
    <conflict type="erroneous initiation">
        <sequence resource="EMBL-CDS" id="CAB78373"/>
    </conflict>
</comment>
<gene>
    <name type="primary">CYP71A20</name>
    <name type="ordered locus">At4g13310</name>
    <name type="ORF">T9E8.50</name>
</gene>
<feature type="chain" id="PRO_0000052070" description="Cytochrome P450 71A20">
    <location>
        <begin position="1"/>
        <end position="497"/>
    </location>
</feature>
<feature type="transmembrane region" description="Helical" evidence="2">
    <location>
        <begin position="3"/>
        <end position="23"/>
    </location>
</feature>
<feature type="binding site" description="axial binding residue" evidence="1">
    <location>
        <position position="440"/>
    </location>
    <ligand>
        <name>heme</name>
        <dbReference type="ChEBI" id="CHEBI:30413"/>
    </ligand>
    <ligandPart>
        <name>Fe</name>
        <dbReference type="ChEBI" id="CHEBI:18248"/>
    </ligandPart>
</feature>
<feature type="sequence conflict" description="In Ref. 3; BX827756." evidence="3" ref="3">
    <original>N</original>
    <variation>D</variation>
    <location>
        <position position="29"/>
    </location>
</feature>
<feature type="sequence conflict" description="In Ref. 3; BX827756." evidence="3" ref="3">
    <original>T</original>
    <variation>A</variation>
    <location>
        <position position="209"/>
    </location>
</feature>
<feature type="sequence conflict" description="In Ref. 3; BX827756." evidence="3" ref="3">
    <original>F</original>
    <variation>S</variation>
    <location>
        <position position="298"/>
    </location>
</feature>
<proteinExistence type="evidence at transcript level"/>
<protein>
    <recommendedName>
        <fullName>Cytochrome P450 71A20</fullName>
        <ecNumber>1.14.-.-</ecNumber>
    </recommendedName>
</protein>